<evidence type="ECO:0000250" key="1"/>
<evidence type="ECO:0000255" key="2">
    <source>
        <dbReference type="PROSITE-ProRule" id="PRU00541"/>
    </source>
</evidence>
<evidence type="ECO:0000255" key="3">
    <source>
        <dbReference type="PROSITE-ProRule" id="PRU00542"/>
    </source>
</evidence>
<evidence type="ECO:0000256" key="4">
    <source>
        <dbReference type="SAM" id="MobiDB-lite"/>
    </source>
</evidence>
<evidence type="ECO:0000305" key="5"/>
<sequence>MTTIASEAYIDDSVNFESFKLDARLLQAIKGSGFTHPTLIQSHAIPLALEEKRDIIAKAATGSGKTLAYLIPVIQTILDYKKSRTNGDEPGTLGIIMVPTRELTQQVTAVLEKLIHYCSKDIKVLNLAADLSTSVLNTLLSENPEIIVGTPSKILNILERNTDTVGIDDLKFLVIDEVDLVLTFGYQDDLDKIAEYLPLKKNLQTFLMSATLSDDIQSLKQKYCRSPAIIKFNDDEINKDKTKLVQYYVRVGEFDKFLFCYVIFKLGLIKGKTLVFVNNIDRGYRLKLVLEQFGIKSCILNNELPANSRQHIVDQFNKNVYHLLIATDDADNIKEFDDEQKDDIQVEEKNDETNTVVAEESTNSTTGIKSKTKNNYKQDKEYGVSRGVDFKNVACVVNFDLPTTAKAYVHRVGRTARAGKSGTAISFVVPLKEFGKHKPSMLPSAKKDEKILSRIIKQQSKLGLEIQPYSFDLKQVEGFRYRMEDGFRAVTQVAVREARIKELKEELLASEKLKRHFEENPIELKSLRHDKELHPARVQNHLKRIPEYLLPENARTDKKKISFIPFHKPNKVGKKSKNSKNKKRKGGKTDALKKF</sequence>
<comment type="function">
    <text evidence="1">ATP-binding RNA helicase involved in the biogenesis of 60S ribosomal subunits and is required for the normal formation of 25S and 5.8S rRNAs.</text>
</comment>
<comment type="catalytic activity">
    <reaction>
        <text>ATP + H2O = ADP + phosphate + H(+)</text>
        <dbReference type="Rhea" id="RHEA:13065"/>
        <dbReference type="ChEBI" id="CHEBI:15377"/>
        <dbReference type="ChEBI" id="CHEBI:15378"/>
        <dbReference type="ChEBI" id="CHEBI:30616"/>
        <dbReference type="ChEBI" id="CHEBI:43474"/>
        <dbReference type="ChEBI" id="CHEBI:456216"/>
        <dbReference type="EC" id="3.6.4.13"/>
    </reaction>
</comment>
<comment type="subcellular location">
    <subcellularLocation>
        <location evidence="1">Nucleus</location>
        <location evidence="1">Nucleolus</location>
    </subcellularLocation>
</comment>
<comment type="domain">
    <text>The Q motif is unique to and characteristic of the DEAD box family of RNA helicases and controls ATP binding and hydrolysis.</text>
</comment>
<comment type="similarity">
    <text evidence="5">Belongs to the DEAD box helicase family. DDX56/DBP9 subfamily.</text>
</comment>
<protein>
    <recommendedName>
        <fullName>ATP-dependent RNA helicase DBP9</fullName>
        <ecNumber>3.6.4.13</ecNumber>
    </recommendedName>
</protein>
<reference key="1">
    <citation type="journal article" date="2004" name="Nature">
        <title>Genome evolution in yeasts.</title>
        <authorList>
            <person name="Dujon B."/>
            <person name="Sherman D."/>
            <person name="Fischer G."/>
            <person name="Durrens P."/>
            <person name="Casaregola S."/>
            <person name="Lafontaine I."/>
            <person name="de Montigny J."/>
            <person name="Marck C."/>
            <person name="Neuveglise C."/>
            <person name="Talla E."/>
            <person name="Goffard N."/>
            <person name="Frangeul L."/>
            <person name="Aigle M."/>
            <person name="Anthouard V."/>
            <person name="Babour A."/>
            <person name="Barbe V."/>
            <person name="Barnay S."/>
            <person name="Blanchin S."/>
            <person name="Beckerich J.-M."/>
            <person name="Beyne E."/>
            <person name="Bleykasten C."/>
            <person name="Boisrame A."/>
            <person name="Boyer J."/>
            <person name="Cattolico L."/>
            <person name="Confanioleri F."/>
            <person name="de Daruvar A."/>
            <person name="Despons L."/>
            <person name="Fabre E."/>
            <person name="Fairhead C."/>
            <person name="Ferry-Dumazet H."/>
            <person name="Groppi A."/>
            <person name="Hantraye F."/>
            <person name="Hennequin C."/>
            <person name="Jauniaux N."/>
            <person name="Joyet P."/>
            <person name="Kachouri R."/>
            <person name="Kerrest A."/>
            <person name="Koszul R."/>
            <person name="Lemaire M."/>
            <person name="Lesur I."/>
            <person name="Ma L."/>
            <person name="Muller H."/>
            <person name="Nicaud J.-M."/>
            <person name="Nikolski M."/>
            <person name="Oztas S."/>
            <person name="Ozier-Kalogeropoulos O."/>
            <person name="Pellenz S."/>
            <person name="Potier S."/>
            <person name="Richard G.-F."/>
            <person name="Straub M.-L."/>
            <person name="Suleau A."/>
            <person name="Swennen D."/>
            <person name="Tekaia F."/>
            <person name="Wesolowski-Louvel M."/>
            <person name="Westhof E."/>
            <person name="Wirth B."/>
            <person name="Zeniou-Meyer M."/>
            <person name="Zivanovic Y."/>
            <person name="Bolotin-Fukuhara M."/>
            <person name="Thierry A."/>
            <person name="Bouchier C."/>
            <person name="Caudron B."/>
            <person name="Scarpelli C."/>
            <person name="Gaillardin C."/>
            <person name="Weissenbach J."/>
            <person name="Wincker P."/>
            <person name="Souciet J.-L."/>
        </authorList>
    </citation>
    <scope>NUCLEOTIDE SEQUENCE [LARGE SCALE GENOMIC DNA]</scope>
    <source>
        <strain>ATCC 2001 / BCRC 20586 / JCM 3761 / NBRC 0622 / NRRL Y-65 / CBS 138</strain>
    </source>
</reference>
<name>DBP9_CANGA</name>
<accession>Q6FUA6</accession>
<keyword id="KW-0067">ATP-binding</keyword>
<keyword id="KW-0347">Helicase</keyword>
<keyword id="KW-0378">Hydrolase</keyword>
<keyword id="KW-0547">Nucleotide-binding</keyword>
<keyword id="KW-0539">Nucleus</keyword>
<keyword id="KW-1185">Reference proteome</keyword>
<keyword id="KW-0690">Ribosome biogenesis</keyword>
<keyword id="KW-0694">RNA-binding</keyword>
<keyword id="KW-0698">rRNA processing</keyword>
<dbReference type="EC" id="3.6.4.13"/>
<dbReference type="EMBL" id="CR380952">
    <property type="protein sequence ID" value="CAG59112.1"/>
    <property type="molecule type" value="Genomic_DNA"/>
</dbReference>
<dbReference type="RefSeq" id="XP_446188.1">
    <property type="nucleotide sequence ID" value="XM_446188.1"/>
</dbReference>
<dbReference type="SMR" id="Q6FUA6"/>
<dbReference type="FunCoup" id="Q6FUA6">
    <property type="interactions" value="1079"/>
</dbReference>
<dbReference type="STRING" id="284593.Q6FUA6"/>
<dbReference type="EnsemblFungi" id="CAGL0F04983g-T">
    <property type="protein sequence ID" value="CAGL0F04983g-T-p1"/>
    <property type="gene ID" value="CAGL0F04983g"/>
</dbReference>
<dbReference type="KEGG" id="cgr:2887936"/>
<dbReference type="CGD" id="CAL0130982">
    <property type="gene designation" value="CAGL0F04983g"/>
</dbReference>
<dbReference type="VEuPathDB" id="FungiDB:CAGL0F04983g"/>
<dbReference type="eggNOG" id="KOG0346">
    <property type="taxonomic scope" value="Eukaryota"/>
</dbReference>
<dbReference type="HOGENOM" id="CLU_003041_17_1_1"/>
<dbReference type="InParanoid" id="Q6FUA6"/>
<dbReference type="OMA" id="NASEQCV"/>
<dbReference type="Proteomes" id="UP000002428">
    <property type="component" value="Chromosome F"/>
</dbReference>
<dbReference type="GO" id="GO:0005829">
    <property type="term" value="C:cytosol"/>
    <property type="evidence" value="ECO:0007669"/>
    <property type="project" value="TreeGrafter"/>
</dbReference>
<dbReference type="GO" id="GO:0005730">
    <property type="term" value="C:nucleolus"/>
    <property type="evidence" value="ECO:0007669"/>
    <property type="project" value="UniProtKB-SubCell"/>
</dbReference>
<dbReference type="GO" id="GO:0005524">
    <property type="term" value="F:ATP binding"/>
    <property type="evidence" value="ECO:0007669"/>
    <property type="project" value="UniProtKB-KW"/>
</dbReference>
<dbReference type="GO" id="GO:0016887">
    <property type="term" value="F:ATP hydrolysis activity"/>
    <property type="evidence" value="ECO:0007669"/>
    <property type="project" value="RHEA"/>
</dbReference>
<dbReference type="GO" id="GO:0003678">
    <property type="term" value="F:DNA helicase activity"/>
    <property type="evidence" value="ECO:0007669"/>
    <property type="project" value="EnsemblFungi"/>
</dbReference>
<dbReference type="GO" id="GO:0033677">
    <property type="term" value="F:DNA/RNA helicase activity"/>
    <property type="evidence" value="ECO:0007669"/>
    <property type="project" value="EnsemblFungi"/>
</dbReference>
<dbReference type="GO" id="GO:0003723">
    <property type="term" value="F:RNA binding"/>
    <property type="evidence" value="ECO:0007669"/>
    <property type="project" value="UniProtKB-KW"/>
</dbReference>
<dbReference type="GO" id="GO:0003724">
    <property type="term" value="F:RNA helicase activity"/>
    <property type="evidence" value="ECO:0007669"/>
    <property type="project" value="UniProtKB-EC"/>
</dbReference>
<dbReference type="GO" id="GO:0000463">
    <property type="term" value="P:maturation of LSU-rRNA from tricistronic rRNA transcript (SSU-rRNA, 5.8S rRNA, LSU-rRNA)"/>
    <property type="evidence" value="ECO:0007669"/>
    <property type="project" value="EnsemblFungi"/>
</dbReference>
<dbReference type="CDD" id="cd17961">
    <property type="entry name" value="DEADc_DDX56"/>
    <property type="match status" value="1"/>
</dbReference>
<dbReference type="CDD" id="cd18787">
    <property type="entry name" value="SF2_C_DEAD"/>
    <property type="match status" value="1"/>
</dbReference>
<dbReference type="Gene3D" id="3.40.50.300">
    <property type="entry name" value="P-loop containing nucleotide triphosphate hydrolases"/>
    <property type="match status" value="2"/>
</dbReference>
<dbReference type="InterPro" id="IPR011545">
    <property type="entry name" value="DEAD/DEAH_box_helicase_dom"/>
</dbReference>
<dbReference type="InterPro" id="IPR050079">
    <property type="entry name" value="DEAD_box_RNA_helicase"/>
</dbReference>
<dbReference type="InterPro" id="IPR014001">
    <property type="entry name" value="Helicase_ATP-bd"/>
</dbReference>
<dbReference type="InterPro" id="IPR001650">
    <property type="entry name" value="Helicase_C-like"/>
</dbReference>
<dbReference type="InterPro" id="IPR027417">
    <property type="entry name" value="P-loop_NTPase"/>
</dbReference>
<dbReference type="InterPro" id="IPR014014">
    <property type="entry name" value="RNA_helicase_DEAD_Q_motif"/>
</dbReference>
<dbReference type="PANTHER" id="PTHR47959">
    <property type="entry name" value="ATP-DEPENDENT RNA HELICASE RHLE-RELATED"/>
    <property type="match status" value="1"/>
</dbReference>
<dbReference type="PANTHER" id="PTHR47959:SF21">
    <property type="entry name" value="DEAD-BOX HELICASE 56"/>
    <property type="match status" value="1"/>
</dbReference>
<dbReference type="Pfam" id="PF00270">
    <property type="entry name" value="DEAD"/>
    <property type="match status" value="1"/>
</dbReference>
<dbReference type="Pfam" id="PF00271">
    <property type="entry name" value="Helicase_C"/>
    <property type="match status" value="2"/>
</dbReference>
<dbReference type="SMART" id="SM00487">
    <property type="entry name" value="DEXDc"/>
    <property type="match status" value="1"/>
</dbReference>
<dbReference type="SMART" id="SM00490">
    <property type="entry name" value="HELICc"/>
    <property type="match status" value="1"/>
</dbReference>
<dbReference type="SUPFAM" id="SSF52540">
    <property type="entry name" value="P-loop containing nucleoside triphosphate hydrolases"/>
    <property type="match status" value="2"/>
</dbReference>
<dbReference type="PROSITE" id="PS51192">
    <property type="entry name" value="HELICASE_ATP_BIND_1"/>
    <property type="match status" value="1"/>
</dbReference>
<dbReference type="PROSITE" id="PS51194">
    <property type="entry name" value="HELICASE_CTER"/>
    <property type="match status" value="1"/>
</dbReference>
<dbReference type="PROSITE" id="PS51195">
    <property type="entry name" value="Q_MOTIF"/>
    <property type="match status" value="1"/>
</dbReference>
<feature type="chain" id="PRO_0000232338" description="ATP-dependent RNA helicase DBP9">
    <location>
        <begin position="1"/>
        <end position="595"/>
    </location>
</feature>
<feature type="domain" description="Helicase ATP-binding" evidence="2">
    <location>
        <begin position="46"/>
        <end position="230"/>
    </location>
</feature>
<feature type="domain" description="Helicase C-terminal" evidence="3">
    <location>
        <begin position="243"/>
        <end position="477"/>
    </location>
</feature>
<feature type="region of interest" description="Disordered" evidence="4">
    <location>
        <begin position="349"/>
        <end position="371"/>
    </location>
</feature>
<feature type="region of interest" description="Disordered" evidence="4">
    <location>
        <begin position="560"/>
        <end position="595"/>
    </location>
</feature>
<feature type="short sequence motif" description="Q motif">
    <location>
        <begin position="14"/>
        <end position="42"/>
    </location>
</feature>
<feature type="short sequence motif" description="DEAD box">
    <location>
        <begin position="176"/>
        <end position="179"/>
    </location>
</feature>
<feature type="compositionally biased region" description="Polar residues" evidence="4">
    <location>
        <begin position="353"/>
        <end position="371"/>
    </location>
</feature>
<feature type="compositionally biased region" description="Basic residues" evidence="4">
    <location>
        <begin position="568"/>
        <end position="586"/>
    </location>
</feature>
<feature type="binding site" evidence="2">
    <location>
        <begin position="59"/>
        <end position="66"/>
    </location>
    <ligand>
        <name>ATP</name>
        <dbReference type="ChEBI" id="CHEBI:30616"/>
    </ligand>
</feature>
<organism>
    <name type="scientific">Candida glabrata (strain ATCC 2001 / BCRC 20586 / JCM 3761 / NBRC 0622 / NRRL Y-65 / CBS 138)</name>
    <name type="common">Yeast</name>
    <name type="synonym">Nakaseomyces glabratus</name>
    <dbReference type="NCBI Taxonomy" id="284593"/>
    <lineage>
        <taxon>Eukaryota</taxon>
        <taxon>Fungi</taxon>
        <taxon>Dikarya</taxon>
        <taxon>Ascomycota</taxon>
        <taxon>Saccharomycotina</taxon>
        <taxon>Saccharomycetes</taxon>
        <taxon>Saccharomycetales</taxon>
        <taxon>Saccharomycetaceae</taxon>
        <taxon>Nakaseomyces</taxon>
    </lineage>
</organism>
<proteinExistence type="inferred from homology"/>
<gene>
    <name type="primary">DBP9</name>
    <name type="ordered locus">CAGL0F04983g</name>
</gene>